<name>RLME_ECOHS</name>
<sequence>MTGKKRSASSSRWLQEHFSDKYVQQAQKKGLRSRAWFKLDEIQQSDKLFKPGMTVVDLGAAPGGWSQYVVTQIGGKGRIIACDLLPMDPIVGVDFLQGDFRDELVMKALLERVGDSKVQVVMSDMAPNMSGTPAVDIPRAMYLVELALEMCRDVLAPGGSFVVKVFQGEGFDEYLREIRSLFTKVKVRKPDSSRARSREVYIVATGRKP</sequence>
<protein>
    <recommendedName>
        <fullName evidence="1">Ribosomal RNA large subunit methyltransferase E</fullName>
        <ecNumber evidence="1">2.1.1.166</ecNumber>
    </recommendedName>
    <alternativeName>
        <fullName evidence="1">23S rRNA Um2552 methyltransferase</fullName>
    </alternativeName>
    <alternativeName>
        <fullName evidence="1">rRNA (uridine-2'-O-)-methyltransferase</fullName>
    </alternativeName>
</protein>
<keyword id="KW-0963">Cytoplasm</keyword>
<keyword id="KW-0489">Methyltransferase</keyword>
<keyword id="KW-0698">rRNA processing</keyword>
<keyword id="KW-0949">S-adenosyl-L-methionine</keyword>
<keyword id="KW-0808">Transferase</keyword>
<gene>
    <name evidence="1" type="primary">rlmE</name>
    <name evidence="1" type="synonym">ftsJ</name>
    <name evidence="1" type="synonym">rrmJ</name>
    <name type="ordered locus">EcHS_A3371</name>
</gene>
<comment type="function">
    <text evidence="1">Specifically methylates the uridine in position 2552 of 23S rRNA at the 2'-O position of the ribose in the fully assembled 50S ribosomal subunit.</text>
</comment>
<comment type="catalytic activity">
    <reaction evidence="1">
        <text>uridine(2552) in 23S rRNA + S-adenosyl-L-methionine = 2'-O-methyluridine(2552) in 23S rRNA + S-adenosyl-L-homocysteine + H(+)</text>
        <dbReference type="Rhea" id="RHEA:42720"/>
        <dbReference type="Rhea" id="RHEA-COMP:10202"/>
        <dbReference type="Rhea" id="RHEA-COMP:10203"/>
        <dbReference type="ChEBI" id="CHEBI:15378"/>
        <dbReference type="ChEBI" id="CHEBI:57856"/>
        <dbReference type="ChEBI" id="CHEBI:59789"/>
        <dbReference type="ChEBI" id="CHEBI:65315"/>
        <dbReference type="ChEBI" id="CHEBI:74478"/>
        <dbReference type="EC" id="2.1.1.166"/>
    </reaction>
</comment>
<comment type="subcellular location">
    <subcellularLocation>
        <location evidence="1">Cytoplasm</location>
    </subcellularLocation>
</comment>
<comment type="similarity">
    <text evidence="1">Belongs to the class I-like SAM-binding methyltransferase superfamily. RNA methyltransferase RlmE family.</text>
</comment>
<feature type="chain" id="PRO_1000087683" description="Ribosomal RNA large subunit methyltransferase E">
    <location>
        <begin position="1"/>
        <end position="209"/>
    </location>
</feature>
<feature type="active site" description="Proton acceptor" evidence="1">
    <location>
        <position position="164"/>
    </location>
</feature>
<feature type="binding site" evidence="1">
    <location>
        <position position="63"/>
    </location>
    <ligand>
        <name>S-adenosyl-L-methionine</name>
        <dbReference type="ChEBI" id="CHEBI:59789"/>
    </ligand>
</feature>
<feature type="binding site" evidence="1">
    <location>
        <position position="65"/>
    </location>
    <ligand>
        <name>S-adenosyl-L-methionine</name>
        <dbReference type="ChEBI" id="CHEBI:59789"/>
    </ligand>
</feature>
<feature type="binding site" evidence="1">
    <location>
        <position position="83"/>
    </location>
    <ligand>
        <name>S-adenosyl-L-methionine</name>
        <dbReference type="ChEBI" id="CHEBI:59789"/>
    </ligand>
</feature>
<feature type="binding site" evidence="1">
    <location>
        <position position="99"/>
    </location>
    <ligand>
        <name>S-adenosyl-L-methionine</name>
        <dbReference type="ChEBI" id="CHEBI:59789"/>
    </ligand>
</feature>
<feature type="binding site" evidence="1">
    <location>
        <position position="124"/>
    </location>
    <ligand>
        <name>S-adenosyl-L-methionine</name>
        <dbReference type="ChEBI" id="CHEBI:59789"/>
    </ligand>
</feature>
<accession>A8A4Z3</accession>
<dbReference type="EC" id="2.1.1.166" evidence="1"/>
<dbReference type="EMBL" id="CP000802">
    <property type="protein sequence ID" value="ABV07597.1"/>
    <property type="molecule type" value="Genomic_DNA"/>
</dbReference>
<dbReference type="RefSeq" id="WP_000145975.1">
    <property type="nucleotide sequence ID" value="NC_009800.1"/>
</dbReference>
<dbReference type="SMR" id="A8A4Z3"/>
<dbReference type="GeneID" id="93778802"/>
<dbReference type="KEGG" id="ecx:EcHS_A3371"/>
<dbReference type="HOGENOM" id="CLU_009422_4_0_6"/>
<dbReference type="GO" id="GO:0005737">
    <property type="term" value="C:cytoplasm"/>
    <property type="evidence" value="ECO:0007669"/>
    <property type="project" value="UniProtKB-SubCell"/>
</dbReference>
<dbReference type="GO" id="GO:0008650">
    <property type="term" value="F:rRNA (uridine-2'-O-)-methyltransferase activity"/>
    <property type="evidence" value="ECO:0007669"/>
    <property type="project" value="UniProtKB-UniRule"/>
</dbReference>
<dbReference type="CDD" id="cd02440">
    <property type="entry name" value="AdoMet_MTases"/>
    <property type="match status" value="1"/>
</dbReference>
<dbReference type="FunFam" id="3.40.50.150:FF:000005">
    <property type="entry name" value="Ribosomal RNA large subunit methyltransferase E"/>
    <property type="match status" value="1"/>
</dbReference>
<dbReference type="Gene3D" id="3.40.50.150">
    <property type="entry name" value="Vaccinia Virus protein VP39"/>
    <property type="match status" value="1"/>
</dbReference>
<dbReference type="HAMAP" id="MF_01547">
    <property type="entry name" value="RNA_methyltr_E"/>
    <property type="match status" value="1"/>
</dbReference>
<dbReference type="InterPro" id="IPR050082">
    <property type="entry name" value="RNA_methyltr_RlmE"/>
</dbReference>
<dbReference type="InterPro" id="IPR002877">
    <property type="entry name" value="RNA_MeTrfase_FtsJ_dom"/>
</dbReference>
<dbReference type="InterPro" id="IPR015507">
    <property type="entry name" value="rRNA-MeTfrase_E"/>
</dbReference>
<dbReference type="InterPro" id="IPR004512">
    <property type="entry name" value="rRNA_MeTrfase_gammaproteobac"/>
</dbReference>
<dbReference type="InterPro" id="IPR029063">
    <property type="entry name" value="SAM-dependent_MTases_sf"/>
</dbReference>
<dbReference type="NCBIfam" id="NF008390">
    <property type="entry name" value="PRK11188.1"/>
    <property type="match status" value="1"/>
</dbReference>
<dbReference type="NCBIfam" id="TIGR00438">
    <property type="entry name" value="rrmJ"/>
    <property type="match status" value="1"/>
</dbReference>
<dbReference type="PANTHER" id="PTHR10920">
    <property type="entry name" value="RIBOSOMAL RNA METHYLTRANSFERASE"/>
    <property type="match status" value="1"/>
</dbReference>
<dbReference type="PANTHER" id="PTHR10920:SF18">
    <property type="entry name" value="RRNA METHYLTRANSFERASE 2, MITOCHONDRIAL"/>
    <property type="match status" value="1"/>
</dbReference>
<dbReference type="Pfam" id="PF01728">
    <property type="entry name" value="FtsJ"/>
    <property type="match status" value="1"/>
</dbReference>
<dbReference type="PIRSF" id="PIRSF005461">
    <property type="entry name" value="23S_rRNA_mtase"/>
    <property type="match status" value="1"/>
</dbReference>
<dbReference type="SUPFAM" id="SSF53335">
    <property type="entry name" value="S-adenosyl-L-methionine-dependent methyltransferases"/>
    <property type="match status" value="1"/>
</dbReference>
<evidence type="ECO:0000255" key="1">
    <source>
        <dbReference type="HAMAP-Rule" id="MF_01547"/>
    </source>
</evidence>
<reference key="1">
    <citation type="journal article" date="2008" name="J. Bacteriol.">
        <title>The pangenome structure of Escherichia coli: comparative genomic analysis of E. coli commensal and pathogenic isolates.</title>
        <authorList>
            <person name="Rasko D.A."/>
            <person name="Rosovitz M.J."/>
            <person name="Myers G.S.A."/>
            <person name="Mongodin E.F."/>
            <person name="Fricke W.F."/>
            <person name="Gajer P."/>
            <person name="Crabtree J."/>
            <person name="Sebaihia M."/>
            <person name="Thomson N.R."/>
            <person name="Chaudhuri R."/>
            <person name="Henderson I.R."/>
            <person name="Sperandio V."/>
            <person name="Ravel J."/>
        </authorList>
    </citation>
    <scope>NUCLEOTIDE SEQUENCE [LARGE SCALE GENOMIC DNA]</scope>
    <source>
        <strain>HS</strain>
    </source>
</reference>
<proteinExistence type="inferred from homology"/>
<organism>
    <name type="scientific">Escherichia coli O9:H4 (strain HS)</name>
    <dbReference type="NCBI Taxonomy" id="331112"/>
    <lineage>
        <taxon>Bacteria</taxon>
        <taxon>Pseudomonadati</taxon>
        <taxon>Pseudomonadota</taxon>
        <taxon>Gammaproteobacteria</taxon>
        <taxon>Enterobacterales</taxon>
        <taxon>Enterobacteriaceae</taxon>
        <taxon>Escherichia</taxon>
    </lineage>
</organism>